<accession>A9NCT0</accession>
<sequence length="305" mass="34456">MRTRTEIVSTTQTSATWRDYFQLCKPRVVLLMLLTAIVGMCLASPGIVSWRVFLFGNLGIALAASSAAAINHLLEHHLDKLMRRTYRRPIVQGKINRKNAAIFAAILCILSMIILIAFVNLLTALLTFITLIGYAGFYTLYLKHATPQNIVIGGLAGAAPPLLGWVAVTGHIDPPALILLLIIFLWTPPHFWALAIHRIDDYAKANIPMLPNTHGIIYTKINILLYTLLLTAISFLPFVIMTSGWIYFSSVCLLNLGFLYWAIRLLTSQRKEIPMRTFQYSIWYLMLLFTALLVDHYVYLALKLY</sequence>
<dbReference type="EC" id="2.5.1.141" evidence="1"/>
<dbReference type="EMBL" id="CP000890">
    <property type="protein sequence ID" value="ABX78777.1"/>
    <property type="molecule type" value="Genomic_DNA"/>
</dbReference>
<dbReference type="RefSeq" id="WP_005768584.1">
    <property type="nucleotide sequence ID" value="NC_010117.1"/>
</dbReference>
<dbReference type="SMR" id="A9NCT0"/>
<dbReference type="KEGG" id="cbs:COXBURSA331_A0943"/>
<dbReference type="HOGENOM" id="CLU_029631_0_2_6"/>
<dbReference type="UniPathway" id="UPA00834">
    <property type="reaction ID" value="UER00712"/>
</dbReference>
<dbReference type="GO" id="GO:0005886">
    <property type="term" value="C:plasma membrane"/>
    <property type="evidence" value="ECO:0007669"/>
    <property type="project" value="UniProtKB-SubCell"/>
</dbReference>
<dbReference type="GO" id="GO:0008495">
    <property type="term" value="F:protoheme IX farnesyltransferase activity"/>
    <property type="evidence" value="ECO:0007669"/>
    <property type="project" value="UniProtKB-UniRule"/>
</dbReference>
<dbReference type="GO" id="GO:0048034">
    <property type="term" value="P:heme O biosynthetic process"/>
    <property type="evidence" value="ECO:0007669"/>
    <property type="project" value="UniProtKB-UniRule"/>
</dbReference>
<dbReference type="CDD" id="cd13957">
    <property type="entry name" value="PT_UbiA_Cox10"/>
    <property type="match status" value="1"/>
</dbReference>
<dbReference type="FunFam" id="1.10.357.140:FF:000001">
    <property type="entry name" value="Protoheme IX farnesyltransferase"/>
    <property type="match status" value="1"/>
</dbReference>
<dbReference type="Gene3D" id="1.10.357.140">
    <property type="entry name" value="UbiA prenyltransferase"/>
    <property type="match status" value="1"/>
</dbReference>
<dbReference type="HAMAP" id="MF_00154">
    <property type="entry name" value="CyoE_CtaB"/>
    <property type="match status" value="1"/>
</dbReference>
<dbReference type="InterPro" id="IPR006369">
    <property type="entry name" value="Protohaem_IX_farnesylTrfase"/>
</dbReference>
<dbReference type="InterPro" id="IPR000537">
    <property type="entry name" value="UbiA_prenyltransferase"/>
</dbReference>
<dbReference type="InterPro" id="IPR030470">
    <property type="entry name" value="UbiA_prenylTrfase_CS"/>
</dbReference>
<dbReference type="InterPro" id="IPR044878">
    <property type="entry name" value="UbiA_sf"/>
</dbReference>
<dbReference type="NCBIfam" id="TIGR01473">
    <property type="entry name" value="cyoE_ctaB"/>
    <property type="match status" value="1"/>
</dbReference>
<dbReference type="NCBIfam" id="NF003349">
    <property type="entry name" value="PRK04375.1-2"/>
    <property type="match status" value="1"/>
</dbReference>
<dbReference type="PANTHER" id="PTHR43448:SF7">
    <property type="entry name" value="4-HYDROXYBENZOATE SOLANESYLTRANSFERASE"/>
    <property type="match status" value="1"/>
</dbReference>
<dbReference type="PANTHER" id="PTHR43448">
    <property type="entry name" value="PROTOHEME IX FARNESYLTRANSFERASE, MITOCHONDRIAL"/>
    <property type="match status" value="1"/>
</dbReference>
<dbReference type="Pfam" id="PF01040">
    <property type="entry name" value="UbiA"/>
    <property type="match status" value="1"/>
</dbReference>
<dbReference type="PROSITE" id="PS00943">
    <property type="entry name" value="UBIA"/>
    <property type="match status" value="1"/>
</dbReference>
<comment type="function">
    <text evidence="1">Converts heme B (protoheme IX) to heme O by substitution of the vinyl group on carbon 2 of heme B porphyrin ring with a hydroxyethyl farnesyl side group.</text>
</comment>
<comment type="catalytic activity">
    <reaction evidence="1">
        <text>heme b + (2E,6E)-farnesyl diphosphate + H2O = Fe(II)-heme o + diphosphate</text>
        <dbReference type="Rhea" id="RHEA:28070"/>
        <dbReference type="ChEBI" id="CHEBI:15377"/>
        <dbReference type="ChEBI" id="CHEBI:33019"/>
        <dbReference type="ChEBI" id="CHEBI:60344"/>
        <dbReference type="ChEBI" id="CHEBI:60530"/>
        <dbReference type="ChEBI" id="CHEBI:175763"/>
        <dbReference type="EC" id="2.5.1.141"/>
    </reaction>
</comment>
<comment type="pathway">
    <text evidence="1">Porphyrin-containing compound metabolism; heme O biosynthesis; heme O from protoheme: step 1/1.</text>
</comment>
<comment type="subcellular location">
    <subcellularLocation>
        <location evidence="1">Cell inner membrane</location>
        <topology evidence="1">Multi-pass membrane protein</topology>
    </subcellularLocation>
</comment>
<comment type="miscellaneous">
    <text evidence="1">Carbon 2 of the heme B porphyrin ring is defined according to the Fischer nomenclature.</text>
</comment>
<comment type="similarity">
    <text evidence="1">Belongs to the UbiA prenyltransferase family. Protoheme IX farnesyltransferase subfamily.</text>
</comment>
<feature type="chain" id="PRO_0000345992" description="Protoheme IX farnesyltransferase">
    <location>
        <begin position="1"/>
        <end position="305"/>
    </location>
</feature>
<feature type="transmembrane region" description="Helical" evidence="1">
    <location>
        <begin position="28"/>
        <end position="48"/>
    </location>
</feature>
<feature type="transmembrane region" description="Helical" evidence="1">
    <location>
        <begin position="52"/>
        <end position="72"/>
    </location>
</feature>
<feature type="transmembrane region" description="Helical" evidence="1">
    <location>
        <begin position="102"/>
        <end position="122"/>
    </location>
</feature>
<feature type="transmembrane region" description="Helical" evidence="1">
    <location>
        <begin position="123"/>
        <end position="143"/>
    </location>
</feature>
<feature type="transmembrane region" description="Helical" evidence="1">
    <location>
        <begin position="150"/>
        <end position="170"/>
    </location>
</feature>
<feature type="transmembrane region" description="Helical" evidence="1">
    <location>
        <begin position="176"/>
        <end position="196"/>
    </location>
</feature>
<feature type="transmembrane region" description="Helical" evidence="1">
    <location>
        <begin position="221"/>
        <end position="241"/>
    </location>
</feature>
<feature type="transmembrane region" description="Helical" evidence="1">
    <location>
        <begin position="243"/>
        <end position="263"/>
    </location>
</feature>
<feature type="transmembrane region" description="Helical" evidence="1">
    <location>
        <begin position="282"/>
        <end position="302"/>
    </location>
</feature>
<organism>
    <name type="scientific">Coxiella burnetii (strain RSA 331 / Henzerling II)</name>
    <dbReference type="NCBI Taxonomy" id="360115"/>
    <lineage>
        <taxon>Bacteria</taxon>
        <taxon>Pseudomonadati</taxon>
        <taxon>Pseudomonadota</taxon>
        <taxon>Gammaproteobacteria</taxon>
        <taxon>Legionellales</taxon>
        <taxon>Coxiellaceae</taxon>
        <taxon>Coxiella</taxon>
    </lineage>
</organism>
<evidence type="ECO:0000255" key="1">
    <source>
        <dbReference type="HAMAP-Rule" id="MF_00154"/>
    </source>
</evidence>
<protein>
    <recommendedName>
        <fullName evidence="1">Protoheme IX farnesyltransferase</fullName>
        <ecNumber evidence="1">2.5.1.141</ecNumber>
    </recommendedName>
    <alternativeName>
        <fullName evidence="1">Heme B farnesyltransferase</fullName>
    </alternativeName>
    <alternativeName>
        <fullName evidence="1">Heme O synthase</fullName>
    </alternativeName>
</protein>
<reference key="1">
    <citation type="submission" date="2007-11" db="EMBL/GenBank/DDBJ databases">
        <title>Genome sequencing of phylogenetically and phenotypically diverse Coxiella burnetii isolates.</title>
        <authorList>
            <person name="Seshadri R."/>
            <person name="Samuel J.E."/>
        </authorList>
    </citation>
    <scope>NUCLEOTIDE SEQUENCE [LARGE SCALE GENOMIC DNA]</scope>
    <source>
        <strain>RSA 331 / Henzerling II</strain>
    </source>
</reference>
<proteinExistence type="inferred from homology"/>
<gene>
    <name evidence="1" type="primary">cyoE</name>
    <name type="ordered locus">COXBURSA331_A0943</name>
</gene>
<name>CYOE_COXBR</name>
<keyword id="KW-0997">Cell inner membrane</keyword>
<keyword id="KW-1003">Cell membrane</keyword>
<keyword id="KW-0350">Heme biosynthesis</keyword>
<keyword id="KW-0472">Membrane</keyword>
<keyword id="KW-0808">Transferase</keyword>
<keyword id="KW-0812">Transmembrane</keyword>
<keyword id="KW-1133">Transmembrane helix</keyword>